<gene>
    <name evidence="1" type="primary">fusA</name>
    <name type="ordered locus">KRH_06130</name>
</gene>
<comment type="function">
    <text evidence="1">Catalyzes the GTP-dependent ribosomal translocation step during translation elongation. During this step, the ribosome changes from the pre-translocational (PRE) to the post-translocational (POST) state as the newly formed A-site-bound peptidyl-tRNA and P-site-bound deacylated tRNA move to the P and E sites, respectively. Catalyzes the coordinated movement of the two tRNA molecules, the mRNA and conformational changes in the ribosome.</text>
</comment>
<comment type="subcellular location">
    <subcellularLocation>
        <location evidence="1">Cytoplasm</location>
    </subcellularLocation>
</comment>
<comment type="similarity">
    <text evidence="1">Belongs to the TRAFAC class translation factor GTPase superfamily. Classic translation factor GTPase family. EF-G/EF-2 subfamily.</text>
</comment>
<evidence type="ECO:0000255" key="1">
    <source>
        <dbReference type="HAMAP-Rule" id="MF_00054"/>
    </source>
</evidence>
<accession>B2GIL1</accession>
<name>EFG_KOCRD</name>
<proteinExistence type="inferred from homology"/>
<keyword id="KW-0963">Cytoplasm</keyword>
<keyword id="KW-0251">Elongation factor</keyword>
<keyword id="KW-0342">GTP-binding</keyword>
<keyword id="KW-0547">Nucleotide-binding</keyword>
<keyword id="KW-0648">Protein biosynthesis</keyword>
<keyword id="KW-1185">Reference proteome</keyword>
<protein>
    <recommendedName>
        <fullName evidence="1">Elongation factor G</fullName>
        <shortName evidence="1">EF-G</shortName>
    </recommendedName>
</protein>
<dbReference type="EMBL" id="AP009152">
    <property type="protein sequence ID" value="BAG28960.1"/>
    <property type="molecule type" value="Genomic_DNA"/>
</dbReference>
<dbReference type="RefSeq" id="WP_012397686.1">
    <property type="nucleotide sequence ID" value="NC_010617.1"/>
</dbReference>
<dbReference type="SMR" id="B2GIL1"/>
<dbReference type="STRING" id="378753.KRH_06130"/>
<dbReference type="KEGG" id="krh:KRH_06130"/>
<dbReference type="eggNOG" id="COG0480">
    <property type="taxonomic scope" value="Bacteria"/>
</dbReference>
<dbReference type="HOGENOM" id="CLU_002794_4_1_11"/>
<dbReference type="OrthoDB" id="9801472at2"/>
<dbReference type="Proteomes" id="UP000008838">
    <property type="component" value="Chromosome"/>
</dbReference>
<dbReference type="GO" id="GO:0005737">
    <property type="term" value="C:cytoplasm"/>
    <property type="evidence" value="ECO:0007669"/>
    <property type="project" value="UniProtKB-SubCell"/>
</dbReference>
<dbReference type="GO" id="GO:0005525">
    <property type="term" value="F:GTP binding"/>
    <property type="evidence" value="ECO:0007669"/>
    <property type="project" value="UniProtKB-UniRule"/>
</dbReference>
<dbReference type="GO" id="GO:0003924">
    <property type="term" value="F:GTPase activity"/>
    <property type="evidence" value="ECO:0007669"/>
    <property type="project" value="InterPro"/>
</dbReference>
<dbReference type="GO" id="GO:0003746">
    <property type="term" value="F:translation elongation factor activity"/>
    <property type="evidence" value="ECO:0007669"/>
    <property type="project" value="UniProtKB-UniRule"/>
</dbReference>
<dbReference type="GO" id="GO:0032790">
    <property type="term" value="P:ribosome disassembly"/>
    <property type="evidence" value="ECO:0007669"/>
    <property type="project" value="TreeGrafter"/>
</dbReference>
<dbReference type="CDD" id="cd01886">
    <property type="entry name" value="EF-G"/>
    <property type="match status" value="1"/>
</dbReference>
<dbReference type="CDD" id="cd16262">
    <property type="entry name" value="EFG_III"/>
    <property type="match status" value="1"/>
</dbReference>
<dbReference type="CDD" id="cd01434">
    <property type="entry name" value="EFG_mtEFG1_IV"/>
    <property type="match status" value="1"/>
</dbReference>
<dbReference type="CDD" id="cd03713">
    <property type="entry name" value="EFG_mtEFG_C"/>
    <property type="match status" value="1"/>
</dbReference>
<dbReference type="CDD" id="cd04088">
    <property type="entry name" value="EFG_mtEFG_II"/>
    <property type="match status" value="1"/>
</dbReference>
<dbReference type="FunFam" id="2.40.30.10:FF:000006">
    <property type="entry name" value="Elongation factor G"/>
    <property type="match status" value="1"/>
</dbReference>
<dbReference type="FunFam" id="3.30.230.10:FF:000003">
    <property type="entry name" value="Elongation factor G"/>
    <property type="match status" value="1"/>
</dbReference>
<dbReference type="FunFam" id="3.30.70.240:FF:000001">
    <property type="entry name" value="Elongation factor G"/>
    <property type="match status" value="1"/>
</dbReference>
<dbReference type="FunFam" id="3.30.70.870:FF:000001">
    <property type="entry name" value="Elongation factor G"/>
    <property type="match status" value="1"/>
</dbReference>
<dbReference type="FunFam" id="3.40.50.300:FF:000029">
    <property type="entry name" value="Elongation factor G"/>
    <property type="match status" value="1"/>
</dbReference>
<dbReference type="Gene3D" id="3.30.230.10">
    <property type="match status" value="1"/>
</dbReference>
<dbReference type="Gene3D" id="3.30.70.240">
    <property type="match status" value="1"/>
</dbReference>
<dbReference type="Gene3D" id="3.30.70.870">
    <property type="entry name" value="Elongation Factor G (Translational Gtpase), domain 3"/>
    <property type="match status" value="1"/>
</dbReference>
<dbReference type="Gene3D" id="3.40.50.300">
    <property type="entry name" value="P-loop containing nucleotide triphosphate hydrolases"/>
    <property type="match status" value="1"/>
</dbReference>
<dbReference type="Gene3D" id="2.40.30.10">
    <property type="entry name" value="Translation factors"/>
    <property type="match status" value="1"/>
</dbReference>
<dbReference type="HAMAP" id="MF_00054_B">
    <property type="entry name" value="EF_G_EF_2_B"/>
    <property type="match status" value="1"/>
</dbReference>
<dbReference type="InterPro" id="IPR041095">
    <property type="entry name" value="EFG_II"/>
</dbReference>
<dbReference type="InterPro" id="IPR009022">
    <property type="entry name" value="EFG_III"/>
</dbReference>
<dbReference type="InterPro" id="IPR035647">
    <property type="entry name" value="EFG_III/V"/>
</dbReference>
<dbReference type="InterPro" id="IPR047872">
    <property type="entry name" value="EFG_IV"/>
</dbReference>
<dbReference type="InterPro" id="IPR035649">
    <property type="entry name" value="EFG_V"/>
</dbReference>
<dbReference type="InterPro" id="IPR000640">
    <property type="entry name" value="EFG_V-like"/>
</dbReference>
<dbReference type="InterPro" id="IPR004161">
    <property type="entry name" value="EFTu-like_2"/>
</dbReference>
<dbReference type="InterPro" id="IPR031157">
    <property type="entry name" value="G_TR_CS"/>
</dbReference>
<dbReference type="InterPro" id="IPR027417">
    <property type="entry name" value="P-loop_NTPase"/>
</dbReference>
<dbReference type="InterPro" id="IPR020568">
    <property type="entry name" value="Ribosomal_Su5_D2-typ_SF"/>
</dbReference>
<dbReference type="InterPro" id="IPR014721">
    <property type="entry name" value="Ribsml_uS5_D2-typ_fold_subgr"/>
</dbReference>
<dbReference type="InterPro" id="IPR005225">
    <property type="entry name" value="Small_GTP-bd"/>
</dbReference>
<dbReference type="InterPro" id="IPR000795">
    <property type="entry name" value="T_Tr_GTP-bd_dom"/>
</dbReference>
<dbReference type="InterPro" id="IPR009000">
    <property type="entry name" value="Transl_B-barrel_sf"/>
</dbReference>
<dbReference type="InterPro" id="IPR004540">
    <property type="entry name" value="Transl_elong_EFG/EF2"/>
</dbReference>
<dbReference type="InterPro" id="IPR005517">
    <property type="entry name" value="Transl_elong_EFG/EF2_IV"/>
</dbReference>
<dbReference type="NCBIfam" id="TIGR00484">
    <property type="entry name" value="EF-G"/>
    <property type="match status" value="1"/>
</dbReference>
<dbReference type="NCBIfam" id="NF009381">
    <property type="entry name" value="PRK12740.1-5"/>
    <property type="match status" value="1"/>
</dbReference>
<dbReference type="NCBIfam" id="TIGR00231">
    <property type="entry name" value="small_GTP"/>
    <property type="match status" value="1"/>
</dbReference>
<dbReference type="PANTHER" id="PTHR43261:SF1">
    <property type="entry name" value="RIBOSOME-RELEASING FACTOR 2, MITOCHONDRIAL"/>
    <property type="match status" value="1"/>
</dbReference>
<dbReference type="PANTHER" id="PTHR43261">
    <property type="entry name" value="TRANSLATION ELONGATION FACTOR G-RELATED"/>
    <property type="match status" value="1"/>
</dbReference>
<dbReference type="Pfam" id="PF00679">
    <property type="entry name" value="EFG_C"/>
    <property type="match status" value="1"/>
</dbReference>
<dbReference type="Pfam" id="PF14492">
    <property type="entry name" value="EFG_III"/>
    <property type="match status" value="1"/>
</dbReference>
<dbReference type="Pfam" id="PF03764">
    <property type="entry name" value="EFG_IV"/>
    <property type="match status" value="1"/>
</dbReference>
<dbReference type="Pfam" id="PF00009">
    <property type="entry name" value="GTP_EFTU"/>
    <property type="match status" value="1"/>
</dbReference>
<dbReference type="Pfam" id="PF03144">
    <property type="entry name" value="GTP_EFTU_D2"/>
    <property type="match status" value="1"/>
</dbReference>
<dbReference type="PRINTS" id="PR00315">
    <property type="entry name" value="ELONGATNFCT"/>
</dbReference>
<dbReference type="SMART" id="SM00838">
    <property type="entry name" value="EFG_C"/>
    <property type="match status" value="1"/>
</dbReference>
<dbReference type="SMART" id="SM00889">
    <property type="entry name" value="EFG_IV"/>
    <property type="match status" value="1"/>
</dbReference>
<dbReference type="SUPFAM" id="SSF54980">
    <property type="entry name" value="EF-G C-terminal domain-like"/>
    <property type="match status" value="2"/>
</dbReference>
<dbReference type="SUPFAM" id="SSF52540">
    <property type="entry name" value="P-loop containing nucleoside triphosphate hydrolases"/>
    <property type="match status" value="1"/>
</dbReference>
<dbReference type="SUPFAM" id="SSF54211">
    <property type="entry name" value="Ribosomal protein S5 domain 2-like"/>
    <property type="match status" value="1"/>
</dbReference>
<dbReference type="SUPFAM" id="SSF50447">
    <property type="entry name" value="Translation proteins"/>
    <property type="match status" value="1"/>
</dbReference>
<dbReference type="PROSITE" id="PS00301">
    <property type="entry name" value="G_TR_1"/>
    <property type="match status" value="1"/>
</dbReference>
<dbReference type="PROSITE" id="PS51722">
    <property type="entry name" value="G_TR_2"/>
    <property type="match status" value="1"/>
</dbReference>
<reference key="1">
    <citation type="journal article" date="2008" name="J. Bacteriol.">
        <title>Complete genome sequence of the soil actinomycete Kocuria rhizophila.</title>
        <authorList>
            <person name="Takarada H."/>
            <person name="Sekine M."/>
            <person name="Kosugi H."/>
            <person name="Matsuo Y."/>
            <person name="Fujisawa T."/>
            <person name="Omata S."/>
            <person name="Kishi E."/>
            <person name="Shimizu A."/>
            <person name="Tsukatani N."/>
            <person name="Tanikawa S."/>
            <person name="Fujita N."/>
            <person name="Harayama S."/>
        </authorList>
    </citation>
    <scope>NUCLEOTIDE SEQUENCE [LARGE SCALE GENOMIC DNA]</scope>
    <source>
        <strain>ATCC 9341 / DSM 348 / NBRC 103217 / DC2201</strain>
    </source>
</reference>
<organism>
    <name type="scientific">Kocuria rhizophila (strain ATCC 9341 / DSM 348 / NBRC 103217 / DC2201)</name>
    <dbReference type="NCBI Taxonomy" id="378753"/>
    <lineage>
        <taxon>Bacteria</taxon>
        <taxon>Bacillati</taxon>
        <taxon>Actinomycetota</taxon>
        <taxon>Actinomycetes</taxon>
        <taxon>Micrococcales</taxon>
        <taxon>Micrococcaceae</taxon>
        <taxon>Kocuria</taxon>
    </lineage>
</organism>
<feature type="chain" id="PRO_1000091724" description="Elongation factor G">
    <location>
        <begin position="1"/>
        <end position="704"/>
    </location>
</feature>
<feature type="domain" description="tr-type G">
    <location>
        <begin position="10"/>
        <end position="290"/>
    </location>
</feature>
<feature type="binding site" evidence="1">
    <location>
        <begin position="19"/>
        <end position="26"/>
    </location>
    <ligand>
        <name>GTP</name>
        <dbReference type="ChEBI" id="CHEBI:37565"/>
    </ligand>
</feature>
<feature type="binding site" evidence="1">
    <location>
        <begin position="83"/>
        <end position="87"/>
    </location>
    <ligand>
        <name>GTP</name>
        <dbReference type="ChEBI" id="CHEBI:37565"/>
    </ligand>
</feature>
<feature type="binding site" evidence="1">
    <location>
        <begin position="137"/>
        <end position="140"/>
    </location>
    <ligand>
        <name>GTP</name>
        <dbReference type="ChEBI" id="CHEBI:37565"/>
    </ligand>
</feature>
<sequence length="704" mass="77515">MALDVLTDLKKVRNIGIMAHIDAGKTTTTERILFYTGINHKLGETHDGASTMDWMAQEQERGITITSAATSCYWHDYQINIIDTPGHVDFTVEVERSLRVLDGAVAVFDGKEGVEPQSETVWRQADKYEVPRICFVNKMDKLGADFYFTVDTIKSRLGATPLVLQLPIGAENDFVGVVDLITMKALVWEGDSKGDVSLGAKYETREIPEDLQDRAAEYRNQLVEAVAEADDELMEKYLGGEELTEDEIKAGIRKLTITSQAYPVLCGSAFKNRGVQPMLDAVVDYLPSPLDVEDVQGHAINDEEEVMTRTADADGPFAALAFKVASHPFYGQLTYIRVYSGKAKAGEQVMNSTKGKRERIGKLFQMHSNKENPVEEISAGHIYAAIGLKDTTTGDTLSDPSNQIVLESMSFPAPVIFVAIEPKTKGDQEKLSTAIQKLSAEDPTFTVSLNDETGQTEIGGMGELHLDILVDRMKREFKVEANVGKPQVAYRETIKKAVEKVDYTHKKQTGGSGQFAKVQVSFEPLPLDAEELYEFDNAVTGGRVPREYIPSVDHGIQDAMQLGILAGYPVVGVKATLVDGAYHDVDSSEMAFKIAGSMVFKEGARRANPVLLEPLMAVEVRTPEEYMGDVIGDLNSRRGQIQSMEDVTGVKLVSALVPLSEMFGYIGDLRSKTQGRAVYSMQFDSYSEVPKAVAEEIIQKNRGE</sequence>